<keyword id="KW-0143">Chaperone</keyword>
<keyword id="KW-0963">Cytoplasm</keyword>
<keyword id="KW-0653">Protein transport</keyword>
<keyword id="KW-0811">Translocation</keyword>
<keyword id="KW-0813">Transport</keyword>
<organism>
    <name type="scientific">Rhizobium johnstonii (strain DSM 114642 / LMG 32736 / 3841)</name>
    <name type="common">Rhizobium leguminosarum bv. viciae</name>
    <dbReference type="NCBI Taxonomy" id="216596"/>
    <lineage>
        <taxon>Bacteria</taxon>
        <taxon>Pseudomonadati</taxon>
        <taxon>Pseudomonadota</taxon>
        <taxon>Alphaproteobacteria</taxon>
        <taxon>Hyphomicrobiales</taxon>
        <taxon>Rhizobiaceae</taxon>
        <taxon>Rhizobium/Agrobacterium group</taxon>
        <taxon>Rhizobium</taxon>
        <taxon>Rhizobium johnstonii</taxon>
    </lineage>
</organism>
<evidence type="ECO:0000255" key="1">
    <source>
        <dbReference type="HAMAP-Rule" id="MF_00821"/>
    </source>
</evidence>
<gene>
    <name evidence="1" type="primary">secB</name>
    <name type="ordered locus">RL0006</name>
</gene>
<sequence length="160" mass="17534">MADDNNSNGAANPTLSILAQYTKDLSFENPGAPRSLQARDKAPTININVNVNANPLSDTDFDVVLSLNAEAKDGDKTVFHAELTYGGVFRVAGFPQEHMLPVLFIECPRMLFPFARQIIADVTRNGGFPPLMIDPIDFTQMFAQRVAEEQARAKVQAVPN</sequence>
<protein>
    <recommendedName>
        <fullName evidence="1">Protein-export protein SecB</fullName>
    </recommendedName>
</protein>
<comment type="function">
    <text evidence="1">One of the proteins required for the normal export of preproteins out of the cell cytoplasm. It is a molecular chaperone that binds to a subset of precursor proteins, maintaining them in a translocation-competent state. It also specifically binds to its receptor SecA.</text>
</comment>
<comment type="subunit">
    <text evidence="1">Homotetramer, a dimer of dimers. One homotetramer interacts with 1 SecA dimer.</text>
</comment>
<comment type="subcellular location">
    <subcellularLocation>
        <location evidence="1">Cytoplasm</location>
    </subcellularLocation>
</comment>
<comment type="similarity">
    <text evidence="1">Belongs to the SecB family.</text>
</comment>
<dbReference type="EMBL" id="AM236080">
    <property type="protein sequence ID" value="CAK05494.1"/>
    <property type="molecule type" value="Genomic_DNA"/>
</dbReference>
<dbReference type="RefSeq" id="WP_003544086.1">
    <property type="nucleotide sequence ID" value="NC_008380.1"/>
</dbReference>
<dbReference type="SMR" id="Q1MNF1"/>
<dbReference type="EnsemblBacteria" id="CAK05494">
    <property type="protein sequence ID" value="CAK05494"/>
    <property type="gene ID" value="RL0006"/>
</dbReference>
<dbReference type="GeneID" id="84667512"/>
<dbReference type="KEGG" id="rle:RL0006"/>
<dbReference type="eggNOG" id="COG1952">
    <property type="taxonomic scope" value="Bacteria"/>
</dbReference>
<dbReference type="HOGENOM" id="CLU_111574_0_0_5"/>
<dbReference type="Proteomes" id="UP000006575">
    <property type="component" value="Chromosome"/>
</dbReference>
<dbReference type="GO" id="GO:0005737">
    <property type="term" value="C:cytoplasm"/>
    <property type="evidence" value="ECO:0007669"/>
    <property type="project" value="UniProtKB-SubCell"/>
</dbReference>
<dbReference type="GO" id="GO:0051082">
    <property type="term" value="F:unfolded protein binding"/>
    <property type="evidence" value="ECO:0007669"/>
    <property type="project" value="InterPro"/>
</dbReference>
<dbReference type="GO" id="GO:0006457">
    <property type="term" value="P:protein folding"/>
    <property type="evidence" value="ECO:0007669"/>
    <property type="project" value="UniProtKB-UniRule"/>
</dbReference>
<dbReference type="GO" id="GO:0051262">
    <property type="term" value="P:protein tetramerization"/>
    <property type="evidence" value="ECO:0007669"/>
    <property type="project" value="InterPro"/>
</dbReference>
<dbReference type="GO" id="GO:0015031">
    <property type="term" value="P:protein transport"/>
    <property type="evidence" value="ECO:0007669"/>
    <property type="project" value="UniProtKB-UniRule"/>
</dbReference>
<dbReference type="Gene3D" id="3.10.420.10">
    <property type="entry name" value="SecB-like"/>
    <property type="match status" value="1"/>
</dbReference>
<dbReference type="HAMAP" id="MF_00821">
    <property type="entry name" value="SecB"/>
    <property type="match status" value="1"/>
</dbReference>
<dbReference type="InterPro" id="IPR003708">
    <property type="entry name" value="SecB"/>
</dbReference>
<dbReference type="InterPro" id="IPR035958">
    <property type="entry name" value="SecB-like_sf"/>
</dbReference>
<dbReference type="NCBIfam" id="NF004392">
    <property type="entry name" value="PRK05751.1-3"/>
    <property type="match status" value="1"/>
</dbReference>
<dbReference type="NCBIfam" id="TIGR00809">
    <property type="entry name" value="secB"/>
    <property type="match status" value="1"/>
</dbReference>
<dbReference type="PANTHER" id="PTHR36918">
    <property type="match status" value="1"/>
</dbReference>
<dbReference type="PANTHER" id="PTHR36918:SF1">
    <property type="entry name" value="PROTEIN-EXPORT PROTEIN SECB"/>
    <property type="match status" value="1"/>
</dbReference>
<dbReference type="Pfam" id="PF02556">
    <property type="entry name" value="SecB"/>
    <property type="match status" value="1"/>
</dbReference>
<dbReference type="PRINTS" id="PR01594">
    <property type="entry name" value="SECBCHAPRONE"/>
</dbReference>
<dbReference type="SUPFAM" id="SSF54611">
    <property type="entry name" value="SecB-like"/>
    <property type="match status" value="1"/>
</dbReference>
<proteinExistence type="inferred from homology"/>
<name>SECB_RHIJ3</name>
<accession>Q1MNF1</accession>
<feature type="chain" id="PRO_1000062503" description="Protein-export protein SecB">
    <location>
        <begin position="1"/>
        <end position="160"/>
    </location>
</feature>
<reference key="1">
    <citation type="journal article" date="2006" name="Genome Biol.">
        <title>The genome of Rhizobium leguminosarum has recognizable core and accessory components.</title>
        <authorList>
            <person name="Young J.P.W."/>
            <person name="Crossman L.C."/>
            <person name="Johnston A.W.B."/>
            <person name="Thomson N.R."/>
            <person name="Ghazoui Z.F."/>
            <person name="Hull K.H."/>
            <person name="Wexler M."/>
            <person name="Curson A.R.J."/>
            <person name="Todd J.D."/>
            <person name="Poole P.S."/>
            <person name="Mauchline T.H."/>
            <person name="East A.K."/>
            <person name="Quail M.A."/>
            <person name="Churcher C."/>
            <person name="Arrowsmith C."/>
            <person name="Cherevach I."/>
            <person name="Chillingworth T."/>
            <person name="Clarke K."/>
            <person name="Cronin A."/>
            <person name="Davis P."/>
            <person name="Fraser A."/>
            <person name="Hance Z."/>
            <person name="Hauser H."/>
            <person name="Jagels K."/>
            <person name="Moule S."/>
            <person name="Mungall K."/>
            <person name="Norbertczak H."/>
            <person name="Rabbinowitsch E."/>
            <person name="Sanders M."/>
            <person name="Simmonds M."/>
            <person name="Whitehead S."/>
            <person name="Parkhill J."/>
        </authorList>
    </citation>
    <scope>NUCLEOTIDE SEQUENCE [LARGE SCALE GENOMIC DNA]</scope>
    <source>
        <strain>DSM 114642 / LMG 32736 / 3841</strain>
    </source>
</reference>